<keyword id="KW-0210">Decarboxylase</keyword>
<keyword id="KW-0456">Lyase</keyword>
<keyword id="KW-0670">Pyruvate</keyword>
<keyword id="KW-1185">Reference proteome</keyword>
<protein>
    <recommendedName>
        <fullName evidence="1">Pyruvoyl-dependent arginine decarboxylase</fullName>
        <shortName evidence="1">PvlArgDC</shortName>
        <ecNumber evidence="1">4.1.1.19</ecNumber>
    </recommendedName>
    <component>
        <recommendedName>
            <fullName evidence="1">Pyruvoyl-dependent arginine decarboxylase subunit beta</fullName>
        </recommendedName>
    </component>
    <component>
        <recommendedName>
            <fullName evidence="1">Pyruvoyl-dependent arginine decarboxylase subunit alpha</fullName>
        </recommendedName>
    </component>
</protein>
<feature type="chain" id="PRO_0000023330" description="Pyruvoyl-dependent arginine decarboxylase subunit beta" evidence="1">
    <location>
        <begin position="1"/>
        <end position="43"/>
    </location>
</feature>
<feature type="chain" id="PRO_0000023331" description="Pyruvoyl-dependent arginine decarboxylase subunit alpha" evidence="1">
    <location>
        <begin position="44"/>
        <end position="158"/>
    </location>
</feature>
<feature type="site" description="Cleavage (non-hydrolytic)" evidence="1">
    <location>
        <begin position="43"/>
        <end position="44"/>
    </location>
</feature>
<feature type="modified residue" description="Pyruvic acid (Ser)" evidence="1">
    <location>
        <position position="44"/>
    </location>
</feature>
<name>PDAD_PYRFU</name>
<sequence>MSWITPKKAIMLAAAAEGGTKLNAFDNALLKMGIGNVNLVKLSSVIPAHIEWLDELPKNIPIGMLLPTVYTHIESDEPGSTISAALGIGLSEGNEGGLIYEYSGYCKKEEAEEMVKKMVEEGFRVRGWKLKEIKIVSAEITVKDKPAAAVAAVVMFPY</sequence>
<dbReference type="EC" id="4.1.1.19" evidence="1"/>
<dbReference type="EMBL" id="AE009950">
    <property type="protein sequence ID" value="AAL81747.1"/>
    <property type="molecule type" value="Genomic_DNA"/>
</dbReference>
<dbReference type="RefSeq" id="WP_011012770.1">
    <property type="nucleotide sequence ID" value="NZ_CP023154.1"/>
</dbReference>
<dbReference type="SMR" id="Q8U0G6"/>
<dbReference type="STRING" id="186497.PF1623"/>
<dbReference type="PaxDb" id="186497-PF1623"/>
<dbReference type="KEGG" id="pfu:PF1623"/>
<dbReference type="PATRIC" id="fig|186497.12.peg.1690"/>
<dbReference type="eggNOG" id="arCOG04490">
    <property type="taxonomic scope" value="Archaea"/>
</dbReference>
<dbReference type="HOGENOM" id="CLU_114389_2_0_2"/>
<dbReference type="OrthoDB" id="30748at2157"/>
<dbReference type="PhylomeDB" id="Q8U0G6"/>
<dbReference type="Proteomes" id="UP000001013">
    <property type="component" value="Chromosome"/>
</dbReference>
<dbReference type="GO" id="GO:0008792">
    <property type="term" value="F:arginine decarboxylase activity"/>
    <property type="evidence" value="ECO:0007669"/>
    <property type="project" value="UniProtKB-UniRule"/>
</dbReference>
<dbReference type="GO" id="GO:0006527">
    <property type="term" value="P:arginine catabolic process"/>
    <property type="evidence" value="ECO:0007669"/>
    <property type="project" value="InterPro"/>
</dbReference>
<dbReference type="Gene3D" id="3.30.60.30">
    <property type="match status" value="1"/>
</dbReference>
<dbReference type="Gene3D" id="3.50.20.10">
    <property type="entry name" value="Pyruvoyl-Dependent Histidine Decarboxylase, subunit B"/>
    <property type="match status" value="1"/>
</dbReference>
<dbReference type="HAMAP" id="MF_01404">
    <property type="entry name" value="PvlArgDC"/>
    <property type="match status" value="1"/>
</dbReference>
<dbReference type="InterPro" id="IPR016104">
    <property type="entry name" value="Pyr-dep_his/arg-deCO2ase"/>
</dbReference>
<dbReference type="InterPro" id="IPR016105">
    <property type="entry name" value="Pyr-dep_his/arg-deCO2ase_sand"/>
</dbReference>
<dbReference type="InterPro" id="IPR002724">
    <property type="entry name" value="Pyruvoyl-dep_arg_deCO2ase"/>
</dbReference>
<dbReference type="NCBIfam" id="TIGR00286">
    <property type="entry name" value="pyruvoyl-dependent arginine decarboxylase"/>
    <property type="match status" value="1"/>
</dbReference>
<dbReference type="PANTHER" id="PTHR40438">
    <property type="entry name" value="PYRUVOYL-DEPENDENT ARGININE DECARBOXYLASE"/>
    <property type="match status" value="1"/>
</dbReference>
<dbReference type="PANTHER" id="PTHR40438:SF1">
    <property type="entry name" value="PYRUVOYL-DEPENDENT ARGININE DECARBOXYLASE"/>
    <property type="match status" value="1"/>
</dbReference>
<dbReference type="Pfam" id="PF01862">
    <property type="entry name" value="PvlArgDC"/>
    <property type="match status" value="1"/>
</dbReference>
<dbReference type="PIRSF" id="PIRSF005216">
    <property type="entry name" value="Pyruvoyl-dep_arg_deCO2ase"/>
    <property type="match status" value="1"/>
</dbReference>
<dbReference type="SFLD" id="SFLDF00471">
    <property type="entry name" value="Pyruvoyl-dependent_arginine_de"/>
    <property type="match status" value="1"/>
</dbReference>
<dbReference type="SFLD" id="SFLDG01170">
    <property type="entry name" value="Pyruvoyl-dependent_arginine_de"/>
    <property type="match status" value="1"/>
</dbReference>
<dbReference type="SFLD" id="SFLDS00055">
    <property type="entry name" value="Pyruvoyl-Dependent_Histidine/A"/>
    <property type="match status" value="1"/>
</dbReference>
<dbReference type="SUPFAM" id="SSF56271">
    <property type="entry name" value="Pyruvoyl-dependent histidine and arginine decarboxylases"/>
    <property type="match status" value="1"/>
</dbReference>
<evidence type="ECO:0000255" key="1">
    <source>
        <dbReference type="HAMAP-Rule" id="MF_01404"/>
    </source>
</evidence>
<comment type="catalytic activity">
    <reaction evidence="1">
        <text>L-arginine + H(+) = agmatine + CO2</text>
        <dbReference type="Rhea" id="RHEA:17641"/>
        <dbReference type="ChEBI" id="CHEBI:15378"/>
        <dbReference type="ChEBI" id="CHEBI:16526"/>
        <dbReference type="ChEBI" id="CHEBI:32682"/>
        <dbReference type="ChEBI" id="CHEBI:58145"/>
        <dbReference type="EC" id="4.1.1.19"/>
    </reaction>
</comment>
<comment type="cofactor">
    <cofactor evidence="1">
        <name>pyruvate</name>
        <dbReference type="ChEBI" id="CHEBI:15361"/>
    </cofactor>
    <text evidence="1">Binds 1 pyruvoyl group covalently per subunit.</text>
</comment>
<comment type="similarity">
    <text evidence="1">Belongs to the PdaD family.</text>
</comment>
<proteinExistence type="inferred from homology"/>
<reference key="1">
    <citation type="journal article" date="1999" name="Genetics">
        <title>Divergence of the hyperthermophilic archaea Pyrococcus furiosus and P. horikoshii inferred from complete genomic sequences.</title>
        <authorList>
            <person name="Maeder D.L."/>
            <person name="Weiss R.B."/>
            <person name="Dunn D.M."/>
            <person name="Cherry J.L."/>
            <person name="Gonzalez J.M."/>
            <person name="DiRuggiero J."/>
            <person name="Robb F.T."/>
        </authorList>
    </citation>
    <scope>NUCLEOTIDE SEQUENCE [LARGE SCALE GENOMIC DNA]</scope>
    <source>
        <strain>ATCC 43587 / DSM 3638 / JCM 8422 / Vc1</strain>
    </source>
</reference>
<organism>
    <name type="scientific">Pyrococcus furiosus (strain ATCC 43587 / DSM 3638 / JCM 8422 / Vc1)</name>
    <dbReference type="NCBI Taxonomy" id="186497"/>
    <lineage>
        <taxon>Archaea</taxon>
        <taxon>Methanobacteriati</taxon>
        <taxon>Methanobacteriota</taxon>
        <taxon>Thermococci</taxon>
        <taxon>Thermococcales</taxon>
        <taxon>Thermococcaceae</taxon>
        <taxon>Pyrococcus</taxon>
    </lineage>
</organism>
<gene>
    <name evidence="1" type="primary">pdaD</name>
    <name type="ordered locus">PF1623</name>
</gene>
<accession>Q8U0G6</accession>